<sequence>MSRTIFCTFLKKDAEGQDFQLYPGEIGKRIYNEISKEAWSQWITKQTMLINEKKLSMMNIEDRKLLEQEMVNFLFEGQDVHIAGYTPPSK</sequence>
<keyword id="KW-0408">Iron</keyword>
<organism>
    <name type="scientific">Yersinia pseudotuberculosis serotype O:1b (strain IP 31758)</name>
    <dbReference type="NCBI Taxonomy" id="349747"/>
    <lineage>
        <taxon>Bacteria</taxon>
        <taxon>Pseudomonadati</taxon>
        <taxon>Pseudomonadota</taxon>
        <taxon>Gammaproteobacteria</taxon>
        <taxon>Enterobacterales</taxon>
        <taxon>Yersiniaceae</taxon>
        <taxon>Yersinia</taxon>
    </lineage>
</organism>
<dbReference type="EMBL" id="CP000720">
    <property type="protein sequence ID" value="ABS46686.1"/>
    <property type="molecule type" value="Genomic_DNA"/>
</dbReference>
<dbReference type="RefSeq" id="WP_002230648.1">
    <property type="nucleotide sequence ID" value="NC_009708.1"/>
</dbReference>
<dbReference type="SMR" id="A7FEX4"/>
<dbReference type="KEGG" id="ypi:YpsIP31758_0818"/>
<dbReference type="HOGENOM" id="CLU_170994_0_0_6"/>
<dbReference type="Proteomes" id="UP000002412">
    <property type="component" value="Chromosome"/>
</dbReference>
<dbReference type="GO" id="GO:0005829">
    <property type="term" value="C:cytosol"/>
    <property type="evidence" value="ECO:0007669"/>
    <property type="project" value="TreeGrafter"/>
</dbReference>
<dbReference type="GO" id="GO:0005506">
    <property type="term" value="F:iron ion binding"/>
    <property type="evidence" value="ECO:0007669"/>
    <property type="project" value="UniProtKB-UniRule"/>
</dbReference>
<dbReference type="GO" id="GO:0034599">
    <property type="term" value="P:cellular response to oxidative stress"/>
    <property type="evidence" value="ECO:0007669"/>
    <property type="project" value="TreeGrafter"/>
</dbReference>
<dbReference type="FunFam" id="1.10.3880.10:FF:000001">
    <property type="entry name" value="Probable Fe(2+)-trafficking protein"/>
    <property type="match status" value="1"/>
</dbReference>
<dbReference type="Gene3D" id="1.10.3880.10">
    <property type="entry name" value="Fe(II) trafficking protein YggX"/>
    <property type="match status" value="1"/>
</dbReference>
<dbReference type="HAMAP" id="MF_00686">
    <property type="entry name" value="Fe_traffic_YggX"/>
    <property type="match status" value="1"/>
</dbReference>
<dbReference type="InterPro" id="IPR007457">
    <property type="entry name" value="Fe_traffick_prot_YggX"/>
</dbReference>
<dbReference type="InterPro" id="IPR036766">
    <property type="entry name" value="Fe_traffick_prot_YggX_sf"/>
</dbReference>
<dbReference type="NCBIfam" id="NF003817">
    <property type="entry name" value="PRK05408.1"/>
    <property type="match status" value="1"/>
</dbReference>
<dbReference type="PANTHER" id="PTHR36965">
    <property type="entry name" value="FE(2+)-TRAFFICKING PROTEIN-RELATED"/>
    <property type="match status" value="1"/>
</dbReference>
<dbReference type="PANTHER" id="PTHR36965:SF1">
    <property type="entry name" value="FE(2+)-TRAFFICKING PROTEIN-RELATED"/>
    <property type="match status" value="1"/>
</dbReference>
<dbReference type="Pfam" id="PF04362">
    <property type="entry name" value="Iron_traffic"/>
    <property type="match status" value="1"/>
</dbReference>
<dbReference type="PIRSF" id="PIRSF029827">
    <property type="entry name" value="Fe_traffic_YggX"/>
    <property type="match status" value="1"/>
</dbReference>
<dbReference type="SUPFAM" id="SSF111148">
    <property type="entry name" value="YggX-like"/>
    <property type="match status" value="1"/>
</dbReference>
<reference key="1">
    <citation type="journal article" date="2007" name="PLoS Genet.">
        <title>The complete genome sequence of Yersinia pseudotuberculosis IP31758, the causative agent of Far East scarlet-like fever.</title>
        <authorList>
            <person name="Eppinger M."/>
            <person name="Rosovitz M.J."/>
            <person name="Fricke W.F."/>
            <person name="Rasko D.A."/>
            <person name="Kokorina G."/>
            <person name="Fayolle C."/>
            <person name="Lindler L.E."/>
            <person name="Carniel E."/>
            <person name="Ravel J."/>
        </authorList>
    </citation>
    <scope>NUCLEOTIDE SEQUENCE [LARGE SCALE GENOMIC DNA]</scope>
    <source>
        <strain>IP 31758</strain>
    </source>
</reference>
<evidence type="ECO:0000255" key="1">
    <source>
        <dbReference type="HAMAP-Rule" id="MF_00686"/>
    </source>
</evidence>
<comment type="function">
    <text evidence="1">Could be a mediator in iron transactions between iron acquisition and iron-requiring processes, such as synthesis and/or repair of Fe-S clusters in biosynthetic enzymes.</text>
</comment>
<comment type="subunit">
    <text evidence="1">Monomer.</text>
</comment>
<comment type="similarity">
    <text evidence="1">Belongs to the Fe(2+)-trafficking protein family.</text>
</comment>
<protein>
    <recommendedName>
        <fullName evidence="1">Probable Fe(2+)-trafficking protein</fullName>
    </recommendedName>
</protein>
<name>FETP_YERP3</name>
<proteinExistence type="inferred from homology"/>
<feature type="chain" id="PRO_1000061998" description="Probable Fe(2+)-trafficking protein">
    <location>
        <begin position="1"/>
        <end position="90"/>
    </location>
</feature>
<gene>
    <name type="ordered locus">YpsIP31758_0818</name>
</gene>
<accession>A7FEX4</accession>